<gene>
    <name evidence="1" type="primary">prfB</name>
    <name type="ordered locus">NMC2116</name>
</gene>
<comment type="function">
    <text evidence="1">Peptide chain release factor 2 directs the termination of translation in response to the peptide chain termination codons UGA and UAA.</text>
</comment>
<comment type="subcellular location">
    <subcellularLocation>
        <location evidence="1">Cytoplasm</location>
    </subcellularLocation>
</comment>
<comment type="PTM">
    <text evidence="1">Methylated by PrmC. Methylation increases the termination efficiency of RF2.</text>
</comment>
<comment type="similarity">
    <text evidence="1">Belongs to the prokaryotic/mitochondrial release factor family.</text>
</comment>
<protein>
    <recommendedName>
        <fullName evidence="1">Peptide chain release factor 2</fullName>
        <shortName evidence="1">RF-2</shortName>
    </recommendedName>
</protein>
<accession>A1KWK6</accession>
<name>RF2_NEIMF</name>
<reference key="1">
    <citation type="journal article" date="2007" name="PLoS Genet.">
        <title>Meningococcal genetic variation mechanisms viewed through comparative analysis of serogroup C strain FAM18.</title>
        <authorList>
            <person name="Bentley S.D."/>
            <person name="Vernikos G.S."/>
            <person name="Snyder L.A.S."/>
            <person name="Churcher C."/>
            <person name="Arrowsmith C."/>
            <person name="Chillingworth T."/>
            <person name="Cronin A."/>
            <person name="Davis P.H."/>
            <person name="Holroyd N.E."/>
            <person name="Jagels K."/>
            <person name="Maddison M."/>
            <person name="Moule S."/>
            <person name="Rabbinowitsch E."/>
            <person name="Sharp S."/>
            <person name="Unwin L."/>
            <person name="Whitehead S."/>
            <person name="Quail M.A."/>
            <person name="Achtman M."/>
            <person name="Barrell B.G."/>
            <person name="Saunders N.J."/>
            <person name="Parkhill J."/>
        </authorList>
    </citation>
    <scope>NUCLEOTIDE SEQUENCE [LARGE SCALE GENOMIC DNA]</scope>
    <source>
        <strain>ATCC 700532 / DSM 15464 / FAM18</strain>
    </source>
</reference>
<organism>
    <name type="scientific">Neisseria meningitidis serogroup C / serotype 2a (strain ATCC 700532 / DSM 15464 / FAM18)</name>
    <dbReference type="NCBI Taxonomy" id="272831"/>
    <lineage>
        <taxon>Bacteria</taxon>
        <taxon>Pseudomonadati</taxon>
        <taxon>Pseudomonadota</taxon>
        <taxon>Betaproteobacteria</taxon>
        <taxon>Neisseriales</taxon>
        <taxon>Neisseriaceae</taxon>
        <taxon>Neisseria</taxon>
    </lineage>
</organism>
<feature type="chain" id="PRO_1000005005" description="Peptide chain release factor 2">
    <location>
        <begin position="1"/>
        <end position="367"/>
    </location>
</feature>
<feature type="modified residue" description="N5-methylglutamine" evidence="1">
    <location>
        <position position="254"/>
    </location>
</feature>
<sequence>MEAEVINQLNNTLNDLEKRSEDIRVYMDYQGKKDRLEEVIGLSEDPELWNDPKRAQEIGKERKILEGIVLTLDNIASGIEDNRMLIEMTVEENDEEGFAAVQEDVAGLEKQMADLEFKRMFNQPADPNNCFIDITAGAGGTEAEDWAGMLFRMYSRYAERKGFKIEILEEDDGEIAGINRATIRVEGEYAYGLLRTETGVHRLVRYSPFDSNNKRHTSFASVFVYPEIDDSIEIEINPADLRIDTYRASGAGGQHINKTDSAVRITHEPTGIVVQCQNDRSQHANKAAAMEMLKSKLYELEMRKRNEEKQALEEGKSDVGWGSQIRSYVLDSSRIKDLRTGYEVGNTKAVLDGDLDGFIEASLKQGV</sequence>
<evidence type="ECO:0000255" key="1">
    <source>
        <dbReference type="HAMAP-Rule" id="MF_00094"/>
    </source>
</evidence>
<dbReference type="EMBL" id="AM421808">
    <property type="protein sequence ID" value="CAM11266.1"/>
    <property type="molecule type" value="Genomic_DNA"/>
</dbReference>
<dbReference type="RefSeq" id="WP_002215143.1">
    <property type="nucleotide sequence ID" value="NC_008767.1"/>
</dbReference>
<dbReference type="SMR" id="A1KWK6"/>
<dbReference type="KEGG" id="nmc:NMC2116"/>
<dbReference type="HOGENOM" id="CLU_036856_6_0_4"/>
<dbReference type="Proteomes" id="UP000002286">
    <property type="component" value="Chromosome"/>
</dbReference>
<dbReference type="GO" id="GO:0005737">
    <property type="term" value="C:cytoplasm"/>
    <property type="evidence" value="ECO:0007669"/>
    <property type="project" value="UniProtKB-SubCell"/>
</dbReference>
<dbReference type="GO" id="GO:0016149">
    <property type="term" value="F:translation release factor activity, codon specific"/>
    <property type="evidence" value="ECO:0007669"/>
    <property type="project" value="UniProtKB-UniRule"/>
</dbReference>
<dbReference type="FunFam" id="3.30.160.20:FF:000010">
    <property type="entry name" value="Peptide chain release factor 2"/>
    <property type="match status" value="1"/>
</dbReference>
<dbReference type="Gene3D" id="3.30.160.20">
    <property type="match status" value="1"/>
</dbReference>
<dbReference type="Gene3D" id="3.30.70.1660">
    <property type="match status" value="1"/>
</dbReference>
<dbReference type="Gene3D" id="1.20.58.410">
    <property type="entry name" value="Release factor"/>
    <property type="match status" value="1"/>
</dbReference>
<dbReference type="HAMAP" id="MF_00094">
    <property type="entry name" value="Rel_fac_2"/>
    <property type="match status" value="1"/>
</dbReference>
<dbReference type="InterPro" id="IPR005139">
    <property type="entry name" value="PCRF"/>
</dbReference>
<dbReference type="InterPro" id="IPR000352">
    <property type="entry name" value="Pep_chain_release_fac_I"/>
</dbReference>
<dbReference type="InterPro" id="IPR045853">
    <property type="entry name" value="Pep_chain_release_fac_I_sf"/>
</dbReference>
<dbReference type="InterPro" id="IPR004374">
    <property type="entry name" value="PrfB"/>
</dbReference>
<dbReference type="NCBIfam" id="TIGR00020">
    <property type="entry name" value="prfB"/>
    <property type="match status" value="1"/>
</dbReference>
<dbReference type="PANTHER" id="PTHR43116:SF3">
    <property type="entry name" value="CLASS I PEPTIDE CHAIN RELEASE FACTOR"/>
    <property type="match status" value="1"/>
</dbReference>
<dbReference type="PANTHER" id="PTHR43116">
    <property type="entry name" value="PEPTIDE CHAIN RELEASE FACTOR 2"/>
    <property type="match status" value="1"/>
</dbReference>
<dbReference type="Pfam" id="PF03462">
    <property type="entry name" value="PCRF"/>
    <property type="match status" value="1"/>
</dbReference>
<dbReference type="Pfam" id="PF00472">
    <property type="entry name" value="RF-1"/>
    <property type="match status" value="1"/>
</dbReference>
<dbReference type="SMART" id="SM00937">
    <property type="entry name" value="PCRF"/>
    <property type="match status" value="1"/>
</dbReference>
<dbReference type="SUPFAM" id="SSF75620">
    <property type="entry name" value="Release factor"/>
    <property type="match status" value="1"/>
</dbReference>
<dbReference type="PROSITE" id="PS00745">
    <property type="entry name" value="RF_PROK_I"/>
    <property type="match status" value="1"/>
</dbReference>
<keyword id="KW-0963">Cytoplasm</keyword>
<keyword id="KW-0488">Methylation</keyword>
<keyword id="KW-0648">Protein biosynthesis</keyword>
<proteinExistence type="inferred from homology"/>